<gene>
    <name evidence="1" type="primary">ppc</name>
    <name type="ordered locus">Ldb0501</name>
</gene>
<protein>
    <recommendedName>
        <fullName evidence="1">Phosphoenolpyruvate carboxylase</fullName>
        <shortName evidence="1">PEPC</shortName>
        <shortName evidence="1">PEPCase</shortName>
        <ecNumber evidence="1">4.1.1.31</ecNumber>
    </recommendedName>
</protein>
<comment type="function">
    <text evidence="1">Forms oxaloacetate, a four-carbon dicarboxylic acid source for the tricarboxylic acid cycle.</text>
</comment>
<comment type="catalytic activity">
    <reaction evidence="1">
        <text>oxaloacetate + phosphate = phosphoenolpyruvate + hydrogencarbonate</text>
        <dbReference type="Rhea" id="RHEA:28370"/>
        <dbReference type="ChEBI" id="CHEBI:16452"/>
        <dbReference type="ChEBI" id="CHEBI:17544"/>
        <dbReference type="ChEBI" id="CHEBI:43474"/>
        <dbReference type="ChEBI" id="CHEBI:58702"/>
        <dbReference type="EC" id="4.1.1.31"/>
    </reaction>
</comment>
<comment type="cofactor">
    <cofactor evidence="1">
        <name>Mg(2+)</name>
        <dbReference type="ChEBI" id="CHEBI:18420"/>
    </cofactor>
</comment>
<comment type="similarity">
    <text evidence="1">Belongs to the PEPCase type 1 family.</text>
</comment>
<reference key="1">
    <citation type="journal article" date="2006" name="Proc. Natl. Acad. Sci. U.S.A.">
        <title>The complete genome sequence of Lactobacillus bulgaricus reveals extensive and ongoing reductive evolution.</title>
        <authorList>
            <person name="van de Guchte M."/>
            <person name="Penaud S."/>
            <person name="Grimaldi C."/>
            <person name="Barbe V."/>
            <person name="Bryson K."/>
            <person name="Nicolas P."/>
            <person name="Robert C."/>
            <person name="Oztas S."/>
            <person name="Mangenot S."/>
            <person name="Couloux A."/>
            <person name="Loux V."/>
            <person name="Dervyn R."/>
            <person name="Bossy R."/>
            <person name="Bolotin A."/>
            <person name="Batto J.-M."/>
            <person name="Walunas T."/>
            <person name="Gibrat J.-F."/>
            <person name="Bessieres P."/>
            <person name="Weissenbach J."/>
            <person name="Ehrlich S.D."/>
            <person name="Maguin E."/>
        </authorList>
    </citation>
    <scope>NUCLEOTIDE SEQUENCE [LARGE SCALE GENOMIC DNA]</scope>
    <source>
        <strain>ATCC 11842 / DSM 20081 / BCRC 10696 / JCM 1002 / NBRC 13953 / NCIMB 11778 / NCTC 12712 / WDCM 00102 / Lb 14</strain>
    </source>
</reference>
<evidence type="ECO:0000255" key="1">
    <source>
        <dbReference type="HAMAP-Rule" id="MF_00595"/>
    </source>
</evidence>
<name>CAPP_LACDA</name>
<dbReference type="EC" id="4.1.1.31" evidence="1"/>
<dbReference type="EMBL" id="CR954253">
    <property type="protein sequence ID" value="CAI97332.1"/>
    <property type="molecule type" value="Genomic_DNA"/>
</dbReference>
<dbReference type="RefSeq" id="WP_011543681.1">
    <property type="nucleotide sequence ID" value="NC_008054.1"/>
</dbReference>
<dbReference type="SMR" id="Q1GBD4"/>
<dbReference type="STRING" id="390333.Ldb0501"/>
<dbReference type="KEGG" id="ldb:Ldb0501"/>
<dbReference type="PATRIC" id="fig|390333.7.peg.450"/>
<dbReference type="eggNOG" id="COG2352">
    <property type="taxonomic scope" value="Bacteria"/>
</dbReference>
<dbReference type="HOGENOM" id="CLU_006557_2_0_9"/>
<dbReference type="BioCyc" id="LDEL390333:LDB_RS02135-MONOMER"/>
<dbReference type="Proteomes" id="UP000001259">
    <property type="component" value="Chromosome"/>
</dbReference>
<dbReference type="GO" id="GO:0005829">
    <property type="term" value="C:cytosol"/>
    <property type="evidence" value="ECO:0007669"/>
    <property type="project" value="TreeGrafter"/>
</dbReference>
<dbReference type="GO" id="GO:0000287">
    <property type="term" value="F:magnesium ion binding"/>
    <property type="evidence" value="ECO:0007669"/>
    <property type="project" value="UniProtKB-UniRule"/>
</dbReference>
<dbReference type="GO" id="GO:0008964">
    <property type="term" value="F:phosphoenolpyruvate carboxylase activity"/>
    <property type="evidence" value="ECO:0007669"/>
    <property type="project" value="UniProtKB-UniRule"/>
</dbReference>
<dbReference type="GO" id="GO:0015977">
    <property type="term" value="P:carbon fixation"/>
    <property type="evidence" value="ECO:0007669"/>
    <property type="project" value="UniProtKB-UniRule"/>
</dbReference>
<dbReference type="GO" id="GO:0006107">
    <property type="term" value="P:oxaloacetate metabolic process"/>
    <property type="evidence" value="ECO:0007669"/>
    <property type="project" value="UniProtKB-UniRule"/>
</dbReference>
<dbReference type="GO" id="GO:0006099">
    <property type="term" value="P:tricarboxylic acid cycle"/>
    <property type="evidence" value="ECO:0007669"/>
    <property type="project" value="InterPro"/>
</dbReference>
<dbReference type="Gene3D" id="1.20.1440.90">
    <property type="entry name" value="Phosphoenolpyruvate/pyruvate domain"/>
    <property type="match status" value="1"/>
</dbReference>
<dbReference type="HAMAP" id="MF_00595">
    <property type="entry name" value="PEPcase_type1"/>
    <property type="match status" value="1"/>
</dbReference>
<dbReference type="InterPro" id="IPR021135">
    <property type="entry name" value="PEP_COase"/>
</dbReference>
<dbReference type="InterPro" id="IPR022805">
    <property type="entry name" value="PEP_COase_bac/pln-type"/>
</dbReference>
<dbReference type="InterPro" id="IPR018129">
    <property type="entry name" value="PEP_COase_Lys_AS"/>
</dbReference>
<dbReference type="InterPro" id="IPR033129">
    <property type="entry name" value="PEPCASE_His_AS"/>
</dbReference>
<dbReference type="InterPro" id="IPR015813">
    <property type="entry name" value="Pyrv/PenolPyrv_kinase-like_dom"/>
</dbReference>
<dbReference type="NCBIfam" id="NF000584">
    <property type="entry name" value="PRK00009.1"/>
    <property type="match status" value="1"/>
</dbReference>
<dbReference type="PANTHER" id="PTHR30523">
    <property type="entry name" value="PHOSPHOENOLPYRUVATE CARBOXYLASE"/>
    <property type="match status" value="1"/>
</dbReference>
<dbReference type="PANTHER" id="PTHR30523:SF6">
    <property type="entry name" value="PHOSPHOENOLPYRUVATE CARBOXYLASE"/>
    <property type="match status" value="1"/>
</dbReference>
<dbReference type="Pfam" id="PF00311">
    <property type="entry name" value="PEPcase"/>
    <property type="match status" value="1"/>
</dbReference>
<dbReference type="PRINTS" id="PR00150">
    <property type="entry name" value="PEPCARBXLASE"/>
</dbReference>
<dbReference type="SUPFAM" id="SSF51621">
    <property type="entry name" value="Phosphoenolpyruvate/pyruvate domain"/>
    <property type="match status" value="1"/>
</dbReference>
<dbReference type="PROSITE" id="PS00781">
    <property type="entry name" value="PEPCASE_1"/>
    <property type="match status" value="1"/>
</dbReference>
<dbReference type="PROSITE" id="PS00393">
    <property type="entry name" value="PEPCASE_2"/>
    <property type="match status" value="1"/>
</dbReference>
<sequence length="909" mass="103282">MTAKKLENNSNHAVTAEEVKILTDLLDESTRHLVGDEEFAKIKGLVKIAASSDHSQLESQIACLSNQEMIIVARYFATLPLLINITEDVDLATEVNLLNNTDKDYLGKLESTVDLVAEKDNAAEILSHVNVVPVLTAHPTQVQRKTILELTNKIHDQLRRHRDVKASTINRKEWTNQLRRYIEIIMQTDIIREKKLKVSNEIKNVMVYYPGSLIPAITKLTARYKELAREKGLNVDGATPITMGMWIGGDRDGNPYVTAETLRLSATIQSEVIFEYYVKALNDLYRTVSVSTSYVQPTPEVAELAKLSADNSPFRENEPYRRAFYYLESRLAHTEMELLDVFSKEAVVKKEAALKAPVYKDAYEFKKDLEAIKRSLIQNHDRAVTGGHFDALLEAIDVFGFHLATIDMRQDSSVNEACVAELLKSARICDNYSDLDEEEKIQILLSELNNDPRSLHSSNSPKSELLQRELKIYHTARLLKDTLGENVIKQHIISHTESISDMLEQAIMLKEYGLLDSEKARVQVVPLFETVEDLQNSREIMKRYLSFDIVKRWVASKGNYQEIMLGYSDSNKDGGYLASCWNLYKAQTELTAIGEEQGIKITFMHGRGGTVGRGGGPSYEAITSQPFGSIKDRIRTTEQGEIIQNKYGNKDAAYYNLEMLVSAAVDRMVSKQKVSQDHIQDFTASMDGIVEDSNRVYRELVFDNPHFHDYFFQATPIKEVSSLNIGSRPAARKKITELSGLRAIPWVFSWSQSRVMFPGWYGVGSAFKHFIDADPNNLKELQEMYQGWPFFHSLLSNVDMVLSKSNMEIAEKYADLCEDEATRSVFDIIKKEWELTKEVILQIEGHSKLLEDNPSLERSLDYRLPYFNVLNYVQLEMIKRGRQEKLSGIYESIIHITINGVASGLRNSG</sequence>
<organism>
    <name type="scientific">Lactobacillus delbrueckii subsp. bulgaricus (strain ATCC 11842 / DSM 20081 / BCRC 10696 / JCM 1002 / NBRC 13953 / NCIMB 11778 / NCTC 12712 / WDCM 00102 / Lb 14)</name>
    <dbReference type="NCBI Taxonomy" id="390333"/>
    <lineage>
        <taxon>Bacteria</taxon>
        <taxon>Bacillati</taxon>
        <taxon>Bacillota</taxon>
        <taxon>Bacilli</taxon>
        <taxon>Lactobacillales</taxon>
        <taxon>Lactobacillaceae</taxon>
        <taxon>Lactobacillus</taxon>
    </lineage>
</organism>
<feature type="chain" id="PRO_1000025563" description="Phosphoenolpyruvate carboxylase">
    <location>
        <begin position="1"/>
        <end position="909"/>
    </location>
</feature>
<feature type="active site" evidence="1">
    <location>
        <position position="138"/>
    </location>
</feature>
<feature type="active site" evidence="1">
    <location>
        <position position="572"/>
    </location>
</feature>
<accession>Q1GBD4</accession>
<keyword id="KW-0120">Carbon dioxide fixation</keyword>
<keyword id="KW-0456">Lyase</keyword>
<keyword id="KW-0460">Magnesium</keyword>
<keyword id="KW-1185">Reference proteome</keyword>
<proteinExistence type="inferred from homology"/>